<reference key="1">
    <citation type="journal article" date="2009" name="Nature">
        <title>Evolution of pathogenicity and sexual reproduction in eight Candida genomes.</title>
        <authorList>
            <person name="Butler G."/>
            <person name="Rasmussen M.D."/>
            <person name="Lin M.F."/>
            <person name="Santos M.A.S."/>
            <person name="Sakthikumar S."/>
            <person name="Munro C.A."/>
            <person name="Rheinbay E."/>
            <person name="Grabherr M."/>
            <person name="Forche A."/>
            <person name="Reedy J.L."/>
            <person name="Agrafioti I."/>
            <person name="Arnaud M.B."/>
            <person name="Bates S."/>
            <person name="Brown A.J.P."/>
            <person name="Brunke S."/>
            <person name="Costanzo M.C."/>
            <person name="Fitzpatrick D.A."/>
            <person name="de Groot P.W.J."/>
            <person name="Harris D."/>
            <person name="Hoyer L.L."/>
            <person name="Hube B."/>
            <person name="Klis F.M."/>
            <person name="Kodira C."/>
            <person name="Lennard N."/>
            <person name="Logue M.E."/>
            <person name="Martin R."/>
            <person name="Neiman A.M."/>
            <person name="Nikolaou E."/>
            <person name="Quail M.A."/>
            <person name="Quinn J."/>
            <person name="Santos M.C."/>
            <person name="Schmitzberger F.F."/>
            <person name="Sherlock G."/>
            <person name="Shah P."/>
            <person name="Silverstein K.A.T."/>
            <person name="Skrzypek M.S."/>
            <person name="Soll D."/>
            <person name="Staggs R."/>
            <person name="Stansfield I."/>
            <person name="Stumpf M.P.H."/>
            <person name="Sudbery P.E."/>
            <person name="Srikantha T."/>
            <person name="Zeng Q."/>
            <person name="Berman J."/>
            <person name="Berriman M."/>
            <person name="Heitman J."/>
            <person name="Gow N.A.R."/>
            <person name="Lorenz M.C."/>
            <person name="Birren B.W."/>
            <person name="Kellis M."/>
            <person name="Cuomo C.A."/>
        </authorList>
    </citation>
    <scope>NUCLEOTIDE SEQUENCE [LARGE SCALE GENOMIC DNA]</scope>
    <source>
        <strain>ATCC 6260 / CBS 566 / DSM 6381 / JCM 1539 / NBRC 10279 / NRRL Y-324</strain>
    </source>
</reference>
<organism>
    <name type="scientific">Meyerozyma guilliermondii (strain ATCC 6260 / CBS 566 / DSM 6381 / JCM 1539 / NBRC 10279 / NRRL Y-324)</name>
    <name type="common">Yeast</name>
    <name type="synonym">Candida guilliermondii</name>
    <dbReference type="NCBI Taxonomy" id="294746"/>
    <lineage>
        <taxon>Eukaryota</taxon>
        <taxon>Fungi</taxon>
        <taxon>Dikarya</taxon>
        <taxon>Ascomycota</taxon>
        <taxon>Saccharomycotina</taxon>
        <taxon>Pichiomycetes</taxon>
        <taxon>Debaryomycetaceae</taxon>
        <taxon>Meyerozyma</taxon>
    </lineage>
</organism>
<evidence type="ECO:0000250" key="1"/>
<evidence type="ECO:0000255" key="2"/>
<evidence type="ECO:0000305" key="3"/>
<proteinExistence type="inferred from homology"/>
<comment type="function">
    <text>Is probably involved in a pathway contributing to genomic integrity.</text>
</comment>
<comment type="subcellular location">
    <subcellularLocation>
        <location evidence="1">Endoplasmic reticulum membrane</location>
        <topology evidence="1">Single-pass type I membrane protein</topology>
    </subcellularLocation>
</comment>
<comment type="similarity">
    <text evidence="3">Belongs to the IRC22 family.</text>
</comment>
<protein>
    <recommendedName>
        <fullName>Increased recombination centers protein 22</fullName>
    </recommendedName>
</protein>
<keyword id="KW-0256">Endoplasmic reticulum</keyword>
<keyword id="KW-0472">Membrane</keyword>
<keyword id="KW-1185">Reference proteome</keyword>
<keyword id="KW-0732">Signal</keyword>
<keyword id="KW-0812">Transmembrane</keyword>
<keyword id="KW-1133">Transmembrane helix</keyword>
<feature type="signal peptide" evidence="2">
    <location>
        <begin position="1"/>
        <end position="21"/>
    </location>
</feature>
<feature type="chain" id="PRO_0000399082" description="Increased recombination centers protein 22">
    <location>
        <begin position="22"/>
        <end position="238"/>
    </location>
</feature>
<feature type="topological domain" description="Lumenal" evidence="2">
    <location>
        <begin position="22"/>
        <end position="169"/>
    </location>
</feature>
<feature type="transmembrane region" description="Helical" evidence="2">
    <location>
        <begin position="170"/>
        <end position="190"/>
    </location>
</feature>
<feature type="topological domain" description="Cytoplasmic" evidence="2">
    <location>
        <begin position="191"/>
        <end position="238"/>
    </location>
</feature>
<accession>A5DEU9</accession>
<gene>
    <name type="primary">IRC22</name>
    <name type="ORF">PGUG_01800</name>
</gene>
<sequence length="238" mass="25766">MKFSLPYVATFLGAFVAGAFAADPEASKDTTSQTVTLQFAVDYSIPHLPNVGPRDLAEVYNGEEFTIAYSFTNNEDKDISIVGVGGAFHDVKTGAIKSNLTASPIEAVTVTPGESGSFSHKVSLNLVPEEYILVPQLFIAFDNDLKLVQARGQRTEVKDVPISVFDPQLLLLEAILLATFAGLGYVAYNIWGKRYFEGTALVNKPKRGASPPVATAKSVDSDWLPEGHLRQKKTKKAN</sequence>
<dbReference type="EMBL" id="CH408156">
    <property type="protein sequence ID" value="EDK37702.1"/>
    <property type="molecule type" value="Genomic_DNA"/>
</dbReference>
<dbReference type="RefSeq" id="XP_001486129.1">
    <property type="nucleotide sequence ID" value="XM_001486079.1"/>
</dbReference>
<dbReference type="FunCoup" id="A5DEU9">
    <property type="interactions" value="29"/>
</dbReference>
<dbReference type="STRING" id="294746.A5DEU9"/>
<dbReference type="GeneID" id="5127803"/>
<dbReference type="KEGG" id="pgu:PGUG_01800"/>
<dbReference type="VEuPathDB" id="FungiDB:PGUG_01800"/>
<dbReference type="eggNOG" id="ENOG502S7BF">
    <property type="taxonomic scope" value="Eukaryota"/>
</dbReference>
<dbReference type="HOGENOM" id="CLU_078554_0_0_1"/>
<dbReference type="InParanoid" id="A5DEU9"/>
<dbReference type="OMA" id="WLPETYK"/>
<dbReference type="OrthoDB" id="1926781at2759"/>
<dbReference type="Proteomes" id="UP000001997">
    <property type="component" value="Unassembled WGS sequence"/>
</dbReference>
<dbReference type="GO" id="GO:0005789">
    <property type="term" value="C:endoplasmic reticulum membrane"/>
    <property type="evidence" value="ECO:0007669"/>
    <property type="project" value="UniProtKB-SubCell"/>
</dbReference>
<dbReference type="InterPro" id="IPR005595">
    <property type="entry name" value="TRAP_alpha"/>
</dbReference>
<dbReference type="PANTHER" id="PTHR12924:SF0">
    <property type="entry name" value="TRANSLOCON-ASSOCIATED PROTEIN SUBUNIT ALPHA"/>
    <property type="match status" value="1"/>
</dbReference>
<dbReference type="PANTHER" id="PTHR12924">
    <property type="entry name" value="TRANSLOCON-ASSOCIATED PROTEIN, ALPHA SUBUNIT"/>
    <property type="match status" value="1"/>
</dbReference>
<dbReference type="Pfam" id="PF03896">
    <property type="entry name" value="TRAP_alpha"/>
    <property type="match status" value="1"/>
</dbReference>
<name>IRC22_PICGU</name>